<evidence type="ECO:0000255" key="1">
    <source>
        <dbReference type="PROSITE-ProRule" id="PRU00237"/>
    </source>
</evidence>
<evidence type="ECO:0000256" key="2">
    <source>
        <dbReference type="SAM" id="MobiDB-lite"/>
    </source>
</evidence>
<evidence type="ECO:0000269" key="3">
    <source>
    </source>
</evidence>
<evidence type="ECO:0000269" key="4">
    <source>
    </source>
</evidence>
<evidence type="ECO:0000269" key="5">
    <source>
    </source>
</evidence>
<evidence type="ECO:0000269" key="6">
    <source>
    </source>
</evidence>
<evidence type="ECO:0000269" key="7">
    <source>
    </source>
</evidence>
<evidence type="ECO:0000303" key="8">
    <source>
    </source>
</evidence>
<evidence type="ECO:0000305" key="9"/>
<evidence type="ECO:0007744" key="10">
    <source>
    </source>
</evidence>
<evidence type="ECO:0007744" key="11">
    <source>
    </source>
</evidence>
<evidence type="ECO:0007744" key="12">
    <source>
    </source>
</evidence>
<evidence type="ECO:0007744" key="13">
    <source>
    </source>
</evidence>
<evidence type="ECO:0007744" key="14">
    <source>
    </source>
</evidence>
<protein>
    <recommendedName>
        <fullName>ETS-related transcription factor Elf-1</fullName>
    </recommendedName>
    <alternativeName>
        <fullName>E74-like factor 1</fullName>
    </alternativeName>
</protein>
<name>ELF1_HUMAN</name>
<comment type="function">
    <text evidence="6">Transcription factor that activates the LYN and BLK promoters. Appears to be required for the T-cell-receptor-mediated trans activation of HIV-2 gene expression. Binds specifically to two purine-rich motifs in the HIV-2 enhancer.</text>
</comment>
<comment type="subunit">
    <text evidence="3 5">Binds to the underphosphorylated form of RB. May interact with other transcription factors in order to regulate specific genes. Interacts with RUNX1.</text>
</comment>
<comment type="interaction">
    <interactant intactId="EBI-765526">
        <id>P32519</id>
    </interactant>
    <interactant intactId="EBI-2293590">
        <id>P31276</id>
        <label>HOXC13</label>
    </interactant>
    <organismsDiffer>false</organismsDiffer>
    <experiments>3</experiments>
</comment>
<comment type="interaction">
    <interactant intactId="EBI-765526">
        <id>P32519</id>
    </interactant>
    <interactant intactId="EBI-356763">
        <id>Q9NZL4</id>
        <label>HSPBP1</label>
    </interactant>
    <organismsDiffer>false</organismsDiffer>
    <experiments>2</experiments>
</comment>
<comment type="interaction">
    <interactant intactId="EBI-765526">
        <id>P32519</id>
    </interactant>
    <interactant intactId="EBI-11956831">
        <id>Q13952-2</id>
        <label>NFYC</label>
    </interactant>
    <organismsDiffer>false</organismsDiffer>
    <experiments>3</experiments>
</comment>
<comment type="interaction">
    <interactant intactId="EBI-765526">
        <id>P32519</id>
    </interactant>
    <interactant intactId="EBI-298336">
        <id>P08047</id>
        <label>SP1</label>
    </interactant>
    <organismsDiffer>false</organismsDiffer>
    <experiments>2</experiments>
</comment>
<comment type="subcellular location">
    <subcellularLocation>
        <location>Nucleus</location>
    </subcellularLocation>
</comment>
<comment type="alternative products">
    <event type="alternative splicing"/>
    <isoform>
        <id>P32519-1</id>
        <name>1</name>
        <sequence type="displayed"/>
    </isoform>
    <isoform>
        <id>P32519-2</id>
        <name>2</name>
        <sequence type="described" ref="VSP_045682"/>
    </isoform>
</comment>
<comment type="tissue specificity">
    <text evidence="6 7">In fetal tissues, it is highly expressed in heart, lung liver and kidney, and weakly expressed in brain. In adult, it is highly expressed in pancreas, spleen, thymus and peripheral blood leukocytes, expressed at moderate levels in heart, placenta, lung, liver, skeletal muscle, kidney, prostate, ovary, small intestine and colon, and weakly expressed in brain and testis.</text>
</comment>
<comment type="similarity">
    <text evidence="9">Belongs to the ETS family.</text>
</comment>
<dbReference type="EMBL" id="M82882">
    <property type="status" value="NOT_ANNOTATED_CDS"/>
    <property type="molecule type" value="mRNA"/>
</dbReference>
<dbReference type="EMBL" id="AK304289">
    <property type="protein sequence ID" value="BAG65147.1"/>
    <property type="molecule type" value="mRNA"/>
</dbReference>
<dbReference type="EMBL" id="AL157877">
    <property type="status" value="NOT_ANNOTATED_CDS"/>
    <property type="molecule type" value="Genomic_DNA"/>
</dbReference>
<dbReference type="EMBL" id="CH471075">
    <property type="protein sequence ID" value="EAX08640.1"/>
    <property type="molecule type" value="Genomic_DNA"/>
</dbReference>
<dbReference type="EMBL" id="BC030507">
    <property type="protein sequence ID" value="AAH30507.1"/>
    <property type="molecule type" value="mRNA"/>
</dbReference>
<dbReference type="CCDS" id="CCDS45043.1">
    <molecule id="P32519-2"/>
</dbReference>
<dbReference type="CCDS" id="CCDS9374.1">
    <molecule id="P32519-1"/>
</dbReference>
<dbReference type="PIR" id="A43361">
    <property type="entry name" value="A43361"/>
</dbReference>
<dbReference type="RefSeq" id="NP_001138825.1">
    <molecule id="P32519-2"/>
    <property type="nucleotide sequence ID" value="NM_001145353.1"/>
</dbReference>
<dbReference type="RefSeq" id="NP_001357259.1">
    <molecule id="P32519-1"/>
    <property type="nucleotide sequence ID" value="NM_001370330.1"/>
</dbReference>
<dbReference type="RefSeq" id="NP_001357260.1">
    <molecule id="P32519-1"/>
    <property type="nucleotide sequence ID" value="NM_001370331.1"/>
</dbReference>
<dbReference type="RefSeq" id="NP_001357261.1">
    <molecule id="P32519-1"/>
    <property type="nucleotide sequence ID" value="NM_001370332.1"/>
</dbReference>
<dbReference type="RefSeq" id="NP_758961.1">
    <molecule id="P32519-1"/>
    <property type="nucleotide sequence ID" value="NM_172373.4"/>
</dbReference>
<dbReference type="RefSeq" id="XP_005266333.1">
    <property type="nucleotide sequence ID" value="XM_005266276.1"/>
</dbReference>
<dbReference type="RefSeq" id="XP_005266334.1">
    <property type="nucleotide sequence ID" value="XM_005266277.3"/>
</dbReference>
<dbReference type="RefSeq" id="XP_011533252.1">
    <property type="nucleotide sequence ID" value="XM_011534950.1"/>
</dbReference>
<dbReference type="RefSeq" id="XP_016875898.1">
    <property type="nucleotide sequence ID" value="XM_017020409.1"/>
</dbReference>
<dbReference type="RefSeq" id="XP_016875899.1">
    <property type="nucleotide sequence ID" value="XM_017020410.1"/>
</dbReference>
<dbReference type="RefSeq" id="XP_016875900.1">
    <property type="nucleotide sequence ID" value="XM_017020411.1"/>
</dbReference>
<dbReference type="RefSeq" id="XP_016875901.1">
    <property type="nucleotide sequence ID" value="XM_017020412.1"/>
</dbReference>
<dbReference type="RefSeq" id="XP_016875902.1">
    <property type="nucleotide sequence ID" value="XM_017020413.1"/>
</dbReference>
<dbReference type="RefSeq" id="XP_047286074.1">
    <molecule id="P32519-1"/>
    <property type="nucleotide sequence ID" value="XM_047430118.1"/>
</dbReference>
<dbReference type="RefSeq" id="XP_047286075.1">
    <molecule id="P32519-1"/>
    <property type="nucleotide sequence ID" value="XM_047430119.1"/>
</dbReference>
<dbReference type="RefSeq" id="XP_047286076.1">
    <molecule id="P32519-1"/>
    <property type="nucleotide sequence ID" value="XM_047430120.1"/>
</dbReference>
<dbReference type="RefSeq" id="XP_047286077.1">
    <molecule id="P32519-1"/>
    <property type="nucleotide sequence ID" value="XM_047430121.1"/>
</dbReference>
<dbReference type="RefSeq" id="XP_047286078.1">
    <molecule id="P32519-1"/>
    <property type="nucleotide sequence ID" value="XM_047430122.1"/>
</dbReference>
<dbReference type="RefSeq" id="XP_047286079.1">
    <molecule id="P32519-1"/>
    <property type="nucleotide sequence ID" value="XM_047430123.1"/>
</dbReference>
<dbReference type="RefSeq" id="XP_047286080.1">
    <molecule id="P32519-1"/>
    <property type="nucleotide sequence ID" value="XM_047430124.1"/>
</dbReference>
<dbReference type="RefSeq" id="XP_054230128.1">
    <molecule id="P32519-1"/>
    <property type="nucleotide sequence ID" value="XM_054374153.1"/>
</dbReference>
<dbReference type="RefSeq" id="XP_054230129.1">
    <molecule id="P32519-1"/>
    <property type="nucleotide sequence ID" value="XM_054374154.1"/>
</dbReference>
<dbReference type="RefSeq" id="XP_054230130.1">
    <molecule id="P32519-1"/>
    <property type="nucleotide sequence ID" value="XM_054374155.1"/>
</dbReference>
<dbReference type="RefSeq" id="XP_054230131.1">
    <molecule id="P32519-1"/>
    <property type="nucleotide sequence ID" value="XM_054374156.1"/>
</dbReference>
<dbReference type="RefSeq" id="XP_054230132.1">
    <molecule id="P32519-1"/>
    <property type="nucleotide sequence ID" value="XM_054374157.1"/>
</dbReference>
<dbReference type="RefSeq" id="XP_054230133.1">
    <molecule id="P32519-1"/>
    <property type="nucleotide sequence ID" value="XM_054374158.1"/>
</dbReference>
<dbReference type="RefSeq" id="XP_054230134.1">
    <molecule id="P32519-1"/>
    <property type="nucleotide sequence ID" value="XM_054374159.1"/>
</dbReference>
<dbReference type="RefSeq" id="XP_054230135.1">
    <molecule id="P32519-1"/>
    <property type="nucleotide sequence ID" value="XM_054374160.1"/>
</dbReference>
<dbReference type="RefSeq" id="XP_054230136.1">
    <molecule id="P32519-1"/>
    <property type="nucleotide sequence ID" value="XM_054374161.1"/>
</dbReference>
<dbReference type="PDB" id="8BZM">
    <property type="method" value="X-ray"/>
    <property type="resolution" value="2.69 A"/>
    <property type="chains" value="B/H=206-294"/>
</dbReference>
<dbReference type="PDBsum" id="8BZM"/>
<dbReference type="SMR" id="P32519"/>
<dbReference type="BioGRID" id="108312">
    <property type="interactions" value="125"/>
</dbReference>
<dbReference type="DIP" id="DIP-185N"/>
<dbReference type="ELM" id="P32519"/>
<dbReference type="FunCoup" id="P32519">
    <property type="interactions" value="4315"/>
</dbReference>
<dbReference type="IntAct" id="P32519">
    <property type="interactions" value="117"/>
</dbReference>
<dbReference type="MINT" id="P32519"/>
<dbReference type="STRING" id="9606.ENSP00000239882"/>
<dbReference type="GlyCosmos" id="P32519">
    <property type="glycosylation" value="19 sites, 2 glycans"/>
</dbReference>
<dbReference type="GlyGen" id="P32519">
    <property type="glycosylation" value="23 sites, 1 N-linked glycan (1 site), 2 O-linked glycans (21 sites)"/>
</dbReference>
<dbReference type="iPTMnet" id="P32519"/>
<dbReference type="MetOSite" id="P32519"/>
<dbReference type="PhosphoSitePlus" id="P32519"/>
<dbReference type="BioMuta" id="ELF1"/>
<dbReference type="DMDM" id="212288097"/>
<dbReference type="jPOST" id="P32519"/>
<dbReference type="MassIVE" id="P32519"/>
<dbReference type="PaxDb" id="9606-ENSP00000239882"/>
<dbReference type="PeptideAtlas" id="P32519"/>
<dbReference type="ProteomicsDB" id="19727"/>
<dbReference type="ProteomicsDB" id="54879">
    <molecule id="P32519-1"/>
</dbReference>
<dbReference type="Pumba" id="P32519"/>
<dbReference type="ABCD" id="P32519">
    <property type="antibodies" value="54 sequenced antibodies"/>
</dbReference>
<dbReference type="Antibodypedia" id="906">
    <property type="antibodies" value="390 antibodies from 38 providers"/>
</dbReference>
<dbReference type="DNASU" id="1997"/>
<dbReference type="Ensembl" id="ENST00000239882.7">
    <molecule id="P32519-1"/>
    <property type="protein sequence ID" value="ENSP00000239882.3"/>
    <property type="gene ID" value="ENSG00000120690.17"/>
</dbReference>
<dbReference type="Ensembl" id="ENST00000625359.1">
    <molecule id="P32519-2"/>
    <property type="protein sequence ID" value="ENSP00000486912.1"/>
    <property type="gene ID" value="ENSG00000120690.17"/>
</dbReference>
<dbReference type="GeneID" id="1997"/>
<dbReference type="KEGG" id="hsa:1997"/>
<dbReference type="MANE-Select" id="ENST00000239882.7">
    <property type="protein sequence ID" value="ENSP00000239882.3"/>
    <property type="RefSeq nucleotide sequence ID" value="NM_172373.4"/>
    <property type="RefSeq protein sequence ID" value="NP_758961.1"/>
</dbReference>
<dbReference type="UCSC" id="uc001uxs.4">
    <molecule id="P32519-1"/>
    <property type="organism name" value="human"/>
</dbReference>
<dbReference type="AGR" id="HGNC:3316"/>
<dbReference type="CTD" id="1997"/>
<dbReference type="DisGeNET" id="1997"/>
<dbReference type="GeneCards" id="ELF1"/>
<dbReference type="HGNC" id="HGNC:3316">
    <property type="gene designation" value="ELF1"/>
</dbReference>
<dbReference type="HPA" id="ENSG00000120690">
    <property type="expression patterns" value="Tissue enhanced (bone)"/>
</dbReference>
<dbReference type="MIM" id="189973">
    <property type="type" value="gene"/>
</dbReference>
<dbReference type="neXtProt" id="NX_P32519"/>
<dbReference type="OpenTargets" id="ENSG00000120690"/>
<dbReference type="PharmGKB" id="PA27744"/>
<dbReference type="VEuPathDB" id="HostDB:ENSG00000120690"/>
<dbReference type="eggNOG" id="KOG3804">
    <property type="taxonomic scope" value="Eukaryota"/>
</dbReference>
<dbReference type="GeneTree" id="ENSGT00940000157039"/>
<dbReference type="InParanoid" id="P32519"/>
<dbReference type="OMA" id="DEKRMTT"/>
<dbReference type="OrthoDB" id="8196042at2759"/>
<dbReference type="PAN-GO" id="P32519">
    <property type="GO annotations" value="4 GO annotations based on evolutionary models"/>
</dbReference>
<dbReference type="PhylomeDB" id="P32519"/>
<dbReference type="TreeFam" id="TF318679"/>
<dbReference type="PathwayCommons" id="P32519"/>
<dbReference type="Reactome" id="R-HSA-8939245">
    <property type="pathway name" value="RUNX1 regulates transcription of genes involved in BCR signaling"/>
</dbReference>
<dbReference type="Reactome" id="R-HSA-8939247">
    <property type="pathway name" value="RUNX1 regulates transcription of genes involved in interleukin signaling"/>
</dbReference>
<dbReference type="SignaLink" id="P32519"/>
<dbReference type="SIGNOR" id="P32519"/>
<dbReference type="BioGRID-ORCS" id="1997">
    <property type="hits" value="27 hits in 1184 CRISPR screens"/>
</dbReference>
<dbReference type="ChiTaRS" id="ELF1">
    <property type="organism name" value="human"/>
</dbReference>
<dbReference type="GenomeRNAi" id="1997"/>
<dbReference type="Pharos" id="P32519">
    <property type="development level" value="Tbio"/>
</dbReference>
<dbReference type="PRO" id="PR:P32519"/>
<dbReference type="Proteomes" id="UP000005640">
    <property type="component" value="Chromosome 13"/>
</dbReference>
<dbReference type="RNAct" id="P32519">
    <property type="molecule type" value="protein"/>
</dbReference>
<dbReference type="Bgee" id="ENSG00000120690">
    <property type="expression patterns" value="Expressed in secondary oocyte and 203 other cell types or tissues"/>
</dbReference>
<dbReference type="ExpressionAtlas" id="P32519">
    <property type="expression patterns" value="baseline and differential"/>
</dbReference>
<dbReference type="GO" id="GO:0000785">
    <property type="term" value="C:chromatin"/>
    <property type="evidence" value="ECO:0000247"/>
    <property type="project" value="NTNU_SB"/>
</dbReference>
<dbReference type="GO" id="GO:0005654">
    <property type="term" value="C:nucleoplasm"/>
    <property type="evidence" value="ECO:0000304"/>
    <property type="project" value="Reactome"/>
</dbReference>
<dbReference type="GO" id="GO:0005634">
    <property type="term" value="C:nucleus"/>
    <property type="evidence" value="ECO:0000314"/>
    <property type="project" value="UniProtKB"/>
</dbReference>
<dbReference type="GO" id="GO:0001228">
    <property type="term" value="F:DNA-binding transcription activator activity, RNA polymerase II-specific"/>
    <property type="evidence" value="ECO:0000314"/>
    <property type="project" value="NTNU_SB"/>
</dbReference>
<dbReference type="GO" id="GO:0003700">
    <property type="term" value="F:DNA-binding transcription factor activity"/>
    <property type="evidence" value="ECO:0000314"/>
    <property type="project" value="UniProtKB"/>
</dbReference>
<dbReference type="GO" id="GO:0000981">
    <property type="term" value="F:DNA-binding transcription factor activity, RNA polymerase II-specific"/>
    <property type="evidence" value="ECO:0000247"/>
    <property type="project" value="NTNU_SB"/>
</dbReference>
<dbReference type="GO" id="GO:0000978">
    <property type="term" value="F:RNA polymerase II cis-regulatory region sequence-specific DNA binding"/>
    <property type="evidence" value="ECO:0000314"/>
    <property type="project" value="NTNU_SB"/>
</dbReference>
<dbReference type="GO" id="GO:1990837">
    <property type="term" value="F:sequence-specific double-stranded DNA binding"/>
    <property type="evidence" value="ECO:0000314"/>
    <property type="project" value="ARUK-UCL"/>
</dbReference>
<dbReference type="GO" id="GO:0030154">
    <property type="term" value="P:cell differentiation"/>
    <property type="evidence" value="ECO:0000318"/>
    <property type="project" value="GO_Central"/>
</dbReference>
<dbReference type="GO" id="GO:0050860">
    <property type="term" value="P:negative regulation of T cell receptor signaling pathway"/>
    <property type="evidence" value="ECO:0007669"/>
    <property type="project" value="Ensembl"/>
</dbReference>
<dbReference type="GO" id="GO:0045893">
    <property type="term" value="P:positive regulation of DNA-templated transcription"/>
    <property type="evidence" value="ECO:0000314"/>
    <property type="project" value="UniProtKB"/>
</dbReference>
<dbReference type="GO" id="GO:0045944">
    <property type="term" value="P:positive regulation of transcription by RNA polymerase II"/>
    <property type="evidence" value="ECO:0000314"/>
    <property type="project" value="UniProtKB"/>
</dbReference>
<dbReference type="GO" id="GO:0001817">
    <property type="term" value="P:regulation of cytokine production"/>
    <property type="evidence" value="ECO:0007669"/>
    <property type="project" value="Ensembl"/>
</dbReference>
<dbReference type="GO" id="GO:0006357">
    <property type="term" value="P:regulation of transcription by RNA polymerase II"/>
    <property type="evidence" value="ECO:0000318"/>
    <property type="project" value="GO_Central"/>
</dbReference>
<dbReference type="FunFam" id="1.10.10.10:FF:000066">
    <property type="entry name" value="ETS-related transcription factor Elf-2 isoform X1"/>
    <property type="match status" value="1"/>
</dbReference>
<dbReference type="Gene3D" id="1.10.10.10">
    <property type="entry name" value="Winged helix-like DNA-binding domain superfamily/Winged helix DNA-binding domain"/>
    <property type="match status" value="1"/>
</dbReference>
<dbReference type="InterPro" id="IPR000418">
    <property type="entry name" value="Ets_dom"/>
</dbReference>
<dbReference type="InterPro" id="IPR046328">
    <property type="entry name" value="ETS_fam"/>
</dbReference>
<dbReference type="InterPro" id="IPR022084">
    <property type="entry name" value="TF_Elf_N"/>
</dbReference>
<dbReference type="InterPro" id="IPR036388">
    <property type="entry name" value="WH-like_DNA-bd_sf"/>
</dbReference>
<dbReference type="InterPro" id="IPR036390">
    <property type="entry name" value="WH_DNA-bd_sf"/>
</dbReference>
<dbReference type="PANTHER" id="PTHR11849">
    <property type="entry name" value="ETS"/>
    <property type="match status" value="1"/>
</dbReference>
<dbReference type="PANTHER" id="PTHR11849:SF156">
    <property type="entry name" value="ETS-RELATED TRANSCRIPTION FACTOR ELF-1"/>
    <property type="match status" value="1"/>
</dbReference>
<dbReference type="Pfam" id="PF12310">
    <property type="entry name" value="Elf-1_N"/>
    <property type="match status" value="1"/>
</dbReference>
<dbReference type="Pfam" id="PF00178">
    <property type="entry name" value="Ets"/>
    <property type="match status" value="1"/>
</dbReference>
<dbReference type="PRINTS" id="PR00454">
    <property type="entry name" value="ETSDOMAIN"/>
</dbReference>
<dbReference type="SMART" id="SM00413">
    <property type="entry name" value="ETS"/>
    <property type="match status" value="1"/>
</dbReference>
<dbReference type="SUPFAM" id="SSF46785">
    <property type="entry name" value="Winged helix' DNA-binding domain"/>
    <property type="match status" value="1"/>
</dbReference>
<dbReference type="PROSITE" id="PS00345">
    <property type="entry name" value="ETS_DOMAIN_1"/>
    <property type="match status" value="1"/>
</dbReference>
<dbReference type="PROSITE" id="PS00346">
    <property type="entry name" value="ETS_DOMAIN_2"/>
    <property type="match status" value="1"/>
</dbReference>
<dbReference type="PROSITE" id="PS50061">
    <property type="entry name" value="ETS_DOMAIN_3"/>
    <property type="match status" value="1"/>
</dbReference>
<organism>
    <name type="scientific">Homo sapiens</name>
    <name type="common">Human</name>
    <dbReference type="NCBI Taxonomy" id="9606"/>
    <lineage>
        <taxon>Eukaryota</taxon>
        <taxon>Metazoa</taxon>
        <taxon>Chordata</taxon>
        <taxon>Craniata</taxon>
        <taxon>Vertebrata</taxon>
        <taxon>Euteleostomi</taxon>
        <taxon>Mammalia</taxon>
        <taxon>Eutheria</taxon>
        <taxon>Euarchontoglires</taxon>
        <taxon>Primates</taxon>
        <taxon>Haplorrhini</taxon>
        <taxon>Catarrhini</taxon>
        <taxon>Hominidae</taxon>
        <taxon>Homo</taxon>
    </lineage>
</organism>
<reference key="1">
    <citation type="journal article" date="1992" name="J. Virol.">
        <title>A novel Ets-related transcription factor, Elf-1, binds to human immunodeficiency virus type 2 regulatory elements that are required for inducible trans activation in T cells.</title>
        <authorList>
            <person name="Leiden J.M."/>
            <person name="Wang C.Y."/>
            <person name="Petryniak B."/>
            <person name="Markovitz D.M."/>
            <person name="Nabel G.J."/>
            <person name="Thompson C.B."/>
        </authorList>
    </citation>
    <scope>NUCLEOTIDE SEQUENCE [MRNA] (ISOFORM 1)</scope>
</reference>
<reference key="2">
    <citation type="journal article" date="2004" name="Nat. Genet.">
        <title>Complete sequencing and characterization of 21,243 full-length human cDNAs.</title>
        <authorList>
            <person name="Ota T."/>
            <person name="Suzuki Y."/>
            <person name="Nishikawa T."/>
            <person name="Otsuki T."/>
            <person name="Sugiyama T."/>
            <person name="Irie R."/>
            <person name="Wakamatsu A."/>
            <person name="Hayashi K."/>
            <person name="Sato H."/>
            <person name="Nagai K."/>
            <person name="Kimura K."/>
            <person name="Makita H."/>
            <person name="Sekine M."/>
            <person name="Obayashi M."/>
            <person name="Nishi T."/>
            <person name="Shibahara T."/>
            <person name="Tanaka T."/>
            <person name="Ishii S."/>
            <person name="Yamamoto J."/>
            <person name="Saito K."/>
            <person name="Kawai Y."/>
            <person name="Isono Y."/>
            <person name="Nakamura Y."/>
            <person name="Nagahari K."/>
            <person name="Murakami K."/>
            <person name="Yasuda T."/>
            <person name="Iwayanagi T."/>
            <person name="Wagatsuma M."/>
            <person name="Shiratori A."/>
            <person name="Sudo H."/>
            <person name="Hosoiri T."/>
            <person name="Kaku Y."/>
            <person name="Kodaira H."/>
            <person name="Kondo H."/>
            <person name="Sugawara M."/>
            <person name="Takahashi M."/>
            <person name="Kanda K."/>
            <person name="Yokoi T."/>
            <person name="Furuya T."/>
            <person name="Kikkawa E."/>
            <person name="Omura Y."/>
            <person name="Abe K."/>
            <person name="Kamihara K."/>
            <person name="Katsuta N."/>
            <person name="Sato K."/>
            <person name="Tanikawa M."/>
            <person name="Yamazaki M."/>
            <person name="Ninomiya K."/>
            <person name="Ishibashi T."/>
            <person name="Yamashita H."/>
            <person name="Murakawa K."/>
            <person name="Fujimori K."/>
            <person name="Tanai H."/>
            <person name="Kimata M."/>
            <person name="Watanabe M."/>
            <person name="Hiraoka S."/>
            <person name="Chiba Y."/>
            <person name="Ishida S."/>
            <person name="Ono Y."/>
            <person name="Takiguchi S."/>
            <person name="Watanabe S."/>
            <person name="Yosida M."/>
            <person name="Hotuta T."/>
            <person name="Kusano J."/>
            <person name="Kanehori K."/>
            <person name="Takahashi-Fujii A."/>
            <person name="Hara H."/>
            <person name="Tanase T.-O."/>
            <person name="Nomura Y."/>
            <person name="Togiya S."/>
            <person name="Komai F."/>
            <person name="Hara R."/>
            <person name="Takeuchi K."/>
            <person name="Arita M."/>
            <person name="Imose N."/>
            <person name="Musashino K."/>
            <person name="Yuuki H."/>
            <person name="Oshima A."/>
            <person name="Sasaki N."/>
            <person name="Aotsuka S."/>
            <person name="Yoshikawa Y."/>
            <person name="Matsunawa H."/>
            <person name="Ichihara T."/>
            <person name="Shiohata N."/>
            <person name="Sano S."/>
            <person name="Moriya S."/>
            <person name="Momiyama H."/>
            <person name="Satoh N."/>
            <person name="Takami S."/>
            <person name="Terashima Y."/>
            <person name="Suzuki O."/>
            <person name="Nakagawa S."/>
            <person name="Senoh A."/>
            <person name="Mizoguchi H."/>
            <person name="Goto Y."/>
            <person name="Shimizu F."/>
            <person name="Wakebe H."/>
            <person name="Hishigaki H."/>
            <person name="Watanabe T."/>
            <person name="Sugiyama A."/>
            <person name="Takemoto M."/>
            <person name="Kawakami B."/>
            <person name="Yamazaki M."/>
            <person name="Watanabe K."/>
            <person name="Kumagai A."/>
            <person name="Itakura S."/>
            <person name="Fukuzumi Y."/>
            <person name="Fujimori Y."/>
            <person name="Komiyama M."/>
            <person name="Tashiro H."/>
            <person name="Tanigami A."/>
            <person name="Fujiwara T."/>
            <person name="Ono T."/>
            <person name="Yamada K."/>
            <person name="Fujii Y."/>
            <person name="Ozaki K."/>
            <person name="Hirao M."/>
            <person name="Ohmori Y."/>
            <person name="Kawabata A."/>
            <person name="Hikiji T."/>
            <person name="Kobatake N."/>
            <person name="Inagaki H."/>
            <person name="Ikema Y."/>
            <person name="Okamoto S."/>
            <person name="Okitani R."/>
            <person name="Kawakami T."/>
            <person name="Noguchi S."/>
            <person name="Itoh T."/>
            <person name="Shigeta K."/>
            <person name="Senba T."/>
            <person name="Matsumura K."/>
            <person name="Nakajima Y."/>
            <person name="Mizuno T."/>
            <person name="Morinaga M."/>
            <person name="Sasaki M."/>
            <person name="Togashi T."/>
            <person name="Oyama M."/>
            <person name="Hata H."/>
            <person name="Watanabe M."/>
            <person name="Komatsu T."/>
            <person name="Mizushima-Sugano J."/>
            <person name="Satoh T."/>
            <person name="Shirai Y."/>
            <person name="Takahashi Y."/>
            <person name="Nakagawa K."/>
            <person name="Okumura K."/>
            <person name="Nagase T."/>
            <person name="Nomura N."/>
            <person name="Kikuchi H."/>
            <person name="Masuho Y."/>
            <person name="Yamashita R."/>
            <person name="Nakai K."/>
            <person name="Yada T."/>
            <person name="Nakamura Y."/>
            <person name="Ohara O."/>
            <person name="Isogai T."/>
            <person name="Sugano S."/>
        </authorList>
    </citation>
    <scope>NUCLEOTIDE SEQUENCE [LARGE SCALE MRNA] (ISOFORM 2)</scope>
    <scope>VARIANTS SER-58 AND SER-343</scope>
    <source>
        <tissue>Trachea</tissue>
    </source>
</reference>
<reference key="3">
    <citation type="journal article" date="2004" name="Nature">
        <title>The DNA sequence and analysis of human chromosome 13.</title>
        <authorList>
            <person name="Dunham A."/>
            <person name="Matthews L.H."/>
            <person name="Burton J."/>
            <person name="Ashurst J.L."/>
            <person name="Howe K.L."/>
            <person name="Ashcroft K.J."/>
            <person name="Beare D.M."/>
            <person name="Burford D.C."/>
            <person name="Hunt S.E."/>
            <person name="Griffiths-Jones S."/>
            <person name="Jones M.C."/>
            <person name="Keenan S.J."/>
            <person name="Oliver K."/>
            <person name="Scott C.E."/>
            <person name="Ainscough R."/>
            <person name="Almeida J.P."/>
            <person name="Ambrose K.D."/>
            <person name="Andrews D.T."/>
            <person name="Ashwell R.I.S."/>
            <person name="Babbage A.K."/>
            <person name="Bagguley C.L."/>
            <person name="Bailey J."/>
            <person name="Bannerjee R."/>
            <person name="Barlow K.F."/>
            <person name="Bates K."/>
            <person name="Beasley H."/>
            <person name="Bird C.P."/>
            <person name="Bray-Allen S."/>
            <person name="Brown A.J."/>
            <person name="Brown J.Y."/>
            <person name="Burrill W."/>
            <person name="Carder C."/>
            <person name="Carter N.P."/>
            <person name="Chapman J.C."/>
            <person name="Clamp M.E."/>
            <person name="Clark S.Y."/>
            <person name="Clarke G."/>
            <person name="Clee C.M."/>
            <person name="Clegg S.C."/>
            <person name="Cobley V."/>
            <person name="Collins J.E."/>
            <person name="Corby N."/>
            <person name="Coville G.J."/>
            <person name="Deloukas P."/>
            <person name="Dhami P."/>
            <person name="Dunham I."/>
            <person name="Dunn M."/>
            <person name="Earthrowl M.E."/>
            <person name="Ellington A.G."/>
            <person name="Faulkner L."/>
            <person name="Frankish A.G."/>
            <person name="Frankland J."/>
            <person name="French L."/>
            <person name="Garner P."/>
            <person name="Garnett J."/>
            <person name="Gilbert J.G.R."/>
            <person name="Gilson C.J."/>
            <person name="Ghori J."/>
            <person name="Grafham D.V."/>
            <person name="Gribble S.M."/>
            <person name="Griffiths C."/>
            <person name="Hall R.E."/>
            <person name="Hammond S."/>
            <person name="Harley J.L."/>
            <person name="Hart E.A."/>
            <person name="Heath P.D."/>
            <person name="Howden P.J."/>
            <person name="Huckle E.J."/>
            <person name="Hunt P.J."/>
            <person name="Hunt A.R."/>
            <person name="Johnson C."/>
            <person name="Johnson D."/>
            <person name="Kay M."/>
            <person name="Kimberley A.M."/>
            <person name="King A."/>
            <person name="Laird G.K."/>
            <person name="Langford C.J."/>
            <person name="Lawlor S."/>
            <person name="Leongamornlert D.A."/>
            <person name="Lloyd D.M."/>
            <person name="Lloyd C."/>
            <person name="Loveland J.E."/>
            <person name="Lovell J."/>
            <person name="Martin S."/>
            <person name="Mashreghi-Mohammadi M."/>
            <person name="McLaren S.J."/>
            <person name="McMurray A."/>
            <person name="Milne S."/>
            <person name="Moore M.J.F."/>
            <person name="Nickerson T."/>
            <person name="Palmer S.A."/>
            <person name="Pearce A.V."/>
            <person name="Peck A.I."/>
            <person name="Pelan S."/>
            <person name="Phillimore B."/>
            <person name="Porter K.M."/>
            <person name="Rice C.M."/>
            <person name="Searle S."/>
            <person name="Sehra H.K."/>
            <person name="Shownkeen R."/>
            <person name="Skuce C.D."/>
            <person name="Smith M."/>
            <person name="Steward C.A."/>
            <person name="Sycamore N."/>
            <person name="Tester J."/>
            <person name="Thomas D.W."/>
            <person name="Tracey A."/>
            <person name="Tromans A."/>
            <person name="Tubby B."/>
            <person name="Wall M."/>
            <person name="Wallis J.M."/>
            <person name="West A.P."/>
            <person name="Whitehead S.L."/>
            <person name="Willey D.L."/>
            <person name="Wilming L."/>
            <person name="Wray P.W."/>
            <person name="Wright M.W."/>
            <person name="Young L."/>
            <person name="Coulson A."/>
            <person name="Durbin R.M."/>
            <person name="Hubbard T."/>
            <person name="Sulston J.E."/>
            <person name="Beck S."/>
            <person name="Bentley D.R."/>
            <person name="Rogers J."/>
            <person name="Ross M.T."/>
        </authorList>
    </citation>
    <scope>NUCLEOTIDE SEQUENCE [LARGE SCALE GENOMIC DNA]</scope>
</reference>
<reference key="4">
    <citation type="submission" date="2005-07" db="EMBL/GenBank/DDBJ databases">
        <authorList>
            <person name="Mural R.J."/>
            <person name="Istrail S."/>
            <person name="Sutton G.G."/>
            <person name="Florea L."/>
            <person name="Halpern A.L."/>
            <person name="Mobarry C.M."/>
            <person name="Lippert R."/>
            <person name="Walenz B."/>
            <person name="Shatkay H."/>
            <person name="Dew I."/>
            <person name="Miller J.R."/>
            <person name="Flanigan M.J."/>
            <person name="Edwards N.J."/>
            <person name="Bolanos R."/>
            <person name="Fasulo D."/>
            <person name="Halldorsson B.V."/>
            <person name="Hannenhalli S."/>
            <person name="Turner R."/>
            <person name="Yooseph S."/>
            <person name="Lu F."/>
            <person name="Nusskern D.R."/>
            <person name="Shue B.C."/>
            <person name="Zheng X.H."/>
            <person name="Zhong F."/>
            <person name="Delcher A.L."/>
            <person name="Huson D.H."/>
            <person name="Kravitz S.A."/>
            <person name="Mouchard L."/>
            <person name="Reinert K."/>
            <person name="Remington K.A."/>
            <person name="Clark A.G."/>
            <person name="Waterman M.S."/>
            <person name="Eichler E.E."/>
            <person name="Adams M.D."/>
            <person name="Hunkapiller M.W."/>
            <person name="Myers E.W."/>
            <person name="Venter J.C."/>
        </authorList>
    </citation>
    <scope>NUCLEOTIDE SEQUENCE [LARGE SCALE GENOMIC DNA]</scope>
</reference>
<reference key="5">
    <citation type="journal article" date="2004" name="Genome Res.">
        <title>The status, quality, and expansion of the NIH full-length cDNA project: the Mammalian Gene Collection (MGC).</title>
        <authorList>
            <consortium name="The MGC Project Team"/>
        </authorList>
    </citation>
    <scope>NUCLEOTIDE SEQUENCE [LARGE SCALE MRNA] (ISOFORM 1)</scope>
    <source>
        <tissue>Lymph</tissue>
    </source>
</reference>
<reference key="6">
    <citation type="journal article" date="1992" name="Mol. Cell. Biol.">
        <title>Cis-acting sequences required for inducible interleukin-2 enhancer function bind a novel Ets-related protein, Elf-1.</title>
        <authorList>
            <person name="Thompson C.B."/>
            <person name="Wang C.Y."/>
            <person name="Ho I.C."/>
            <person name="Bohjanen P.R."/>
            <person name="Petryniak B."/>
            <person name="June C.H."/>
            <person name="Miesfeldt S."/>
            <person name="Zhang L."/>
            <person name="Nabel G.J."/>
            <person name="Karpinski B."/>
        </authorList>
    </citation>
    <scope>NUCLEOTIDE SEQUENCE [MRNA] OF 204-289 (ISOFORM 1)</scope>
</reference>
<reference key="7">
    <citation type="journal article" date="1993" name="Science">
        <title>Regulation of the Ets-related transcription factor Elf-1 by binding to the retinoblastoma protein.</title>
        <authorList>
            <person name="Wang C.Y."/>
            <person name="Petryniak B."/>
            <person name="Thompson C.B."/>
            <person name="Kaelin W.G. Jr."/>
            <person name="Leiden J.M."/>
        </authorList>
    </citation>
    <scope>INTERACTION WITH RB</scope>
</reference>
<reference key="8">
    <citation type="journal article" date="1996" name="Mol. Cell. Biol.">
        <title>Characterization of NERF, a novel transcription factor related to the Ets factor ELF-1.</title>
        <authorList>
            <person name="Oettgen P."/>
            <person name="Akbarali Y."/>
            <person name="Boltax J."/>
            <person name="Best J."/>
            <person name="Kunsch C."/>
            <person name="Libermann T.A."/>
        </authorList>
    </citation>
    <scope>FUNCTION</scope>
    <scope>TISSUE SPECIFICITY</scope>
</reference>
<reference key="9">
    <citation type="journal article" date="1998" name="Gene">
        <title>Cloning of a novel human ELF-1-related ETS transcription factor, ELFR, its characterization and chromosomal assignment relative to ELF-1.</title>
        <authorList>
            <person name="Aryee D.N.T."/>
            <person name="Petermann R."/>
            <person name="Kos K."/>
            <person name="Henn T."/>
            <person name="Haas O.A."/>
            <person name="Kovar H."/>
        </authorList>
    </citation>
    <scope>TISSUE SPECIFICITY</scope>
</reference>
<reference key="10">
    <citation type="journal article" date="1999" name="Mol. Cell. Biol.">
        <title>Functional and physical interactions between AML1 proteins and an ETS protein, MEF: implications for the pathogenesis of t(8;21)-positive leukemias.</title>
        <authorList>
            <person name="Mao S."/>
            <person name="Frank R.C."/>
            <person name="Zhang J."/>
            <person name="Miyazaki Y."/>
            <person name="Nimer S.D."/>
        </authorList>
    </citation>
    <scope>INTERACTION WITH RUNX1</scope>
</reference>
<reference key="11">
    <citation type="journal article" date="2006" name="Nat. Biotechnol.">
        <title>A probability-based approach for high-throughput protein phosphorylation analysis and site localization.</title>
        <authorList>
            <person name="Beausoleil S.A."/>
            <person name="Villen J."/>
            <person name="Gerber S.A."/>
            <person name="Rush J."/>
            <person name="Gygi S.P."/>
        </authorList>
    </citation>
    <scope>PHOSPHORYLATION [LARGE SCALE ANALYSIS] AT SER-432</scope>
    <scope>IDENTIFICATION BY MASS SPECTROMETRY [LARGE SCALE ANALYSIS]</scope>
    <source>
        <tissue>Cervix carcinoma</tissue>
    </source>
</reference>
<reference key="12">
    <citation type="journal article" date="2007" name="Science">
        <title>ATM and ATR substrate analysis reveals extensive protein networks responsive to DNA damage.</title>
        <authorList>
            <person name="Matsuoka S."/>
            <person name="Ballif B.A."/>
            <person name="Smogorzewska A."/>
            <person name="McDonald E.R. III"/>
            <person name="Hurov K.E."/>
            <person name="Luo J."/>
            <person name="Bakalarski C.E."/>
            <person name="Zhao Z."/>
            <person name="Solimini N."/>
            <person name="Lerenthal Y."/>
            <person name="Shiloh Y."/>
            <person name="Gygi S.P."/>
            <person name="Elledge S.J."/>
        </authorList>
    </citation>
    <scope>IDENTIFICATION BY MASS SPECTROMETRY [LARGE SCALE ANALYSIS]</scope>
    <source>
        <tissue>Embryonic kidney</tissue>
    </source>
</reference>
<reference key="13">
    <citation type="journal article" date="2008" name="Proc. Natl. Acad. Sci. U.S.A.">
        <title>A quantitative atlas of mitotic phosphorylation.</title>
        <authorList>
            <person name="Dephoure N."/>
            <person name="Zhou C."/>
            <person name="Villen J."/>
            <person name="Beausoleil S.A."/>
            <person name="Bakalarski C.E."/>
            <person name="Elledge S.J."/>
            <person name="Gygi S.P."/>
        </authorList>
    </citation>
    <scope>PHOSPHORYLATION [LARGE SCALE ANALYSIS] AT SER-168 AND SER-432</scope>
    <scope>IDENTIFICATION BY MASS SPECTROMETRY [LARGE SCALE ANALYSIS]</scope>
    <source>
        <tissue>Cervix carcinoma</tissue>
    </source>
</reference>
<reference key="14">
    <citation type="journal article" date="2009" name="Anal. Chem.">
        <title>Lys-N and trypsin cover complementary parts of the phosphoproteome in a refined SCX-based approach.</title>
        <authorList>
            <person name="Gauci S."/>
            <person name="Helbig A.O."/>
            <person name="Slijper M."/>
            <person name="Krijgsveld J."/>
            <person name="Heck A.J."/>
            <person name="Mohammed S."/>
        </authorList>
    </citation>
    <scope>IDENTIFICATION BY MASS SPECTROMETRY [LARGE SCALE ANALYSIS]</scope>
</reference>
<reference key="15">
    <citation type="journal article" date="2009" name="Mol. Cell. Proteomics">
        <title>Large-scale proteomics analysis of the human kinome.</title>
        <authorList>
            <person name="Oppermann F.S."/>
            <person name="Gnad F."/>
            <person name="Olsen J.V."/>
            <person name="Hornberger R."/>
            <person name="Greff Z."/>
            <person name="Keri G."/>
            <person name="Mann M."/>
            <person name="Daub H."/>
        </authorList>
    </citation>
    <scope>IDENTIFICATION BY MASS SPECTROMETRY [LARGE SCALE ANALYSIS]</scope>
</reference>
<reference key="16">
    <citation type="journal article" date="2009" name="Sci. Signal.">
        <title>Quantitative phosphoproteomic analysis of T cell receptor signaling reveals system-wide modulation of protein-protein interactions.</title>
        <authorList>
            <person name="Mayya V."/>
            <person name="Lundgren D.H."/>
            <person name="Hwang S.-I."/>
            <person name="Rezaul K."/>
            <person name="Wu L."/>
            <person name="Eng J.K."/>
            <person name="Rodionov V."/>
            <person name="Han D.K."/>
        </authorList>
    </citation>
    <scope>PHOSPHORYLATION [LARGE SCALE ANALYSIS] AT SER-163; SER-167 AND SER-432</scope>
    <scope>IDENTIFICATION BY MASS SPECTROMETRY [LARGE SCALE ANALYSIS]</scope>
    <source>
        <tissue>Leukemic T-cell</tissue>
    </source>
</reference>
<reference key="17">
    <citation type="journal article" date="2011" name="BMC Syst. Biol.">
        <title>Initial characterization of the human central proteome.</title>
        <authorList>
            <person name="Burkard T.R."/>
            <person name="Planyavsky M."/>
            <person name="Kaupe I."/>
            <person name="Breitwieser F.P."/>
            <person name="Buerckstuemmer T."/>
            <person name="Bennett K.L."/>
            <person name="Superti-Furga G."/>
            <person name="Colinge J."/>
        </authorList>
    </citation>
    <scope>IDENTIFICATION BY MASS SPECTROMETRY [LARGE SCALE ANALYSIS]</scope>
</reference>
<reference key="18">
    <citation type="journal article" date="2013" name="J. Proteome Res.">
        <title>Toward a comprehensive characterization of a human cancer cell phosphoproteome.</title>
        <authorList>
            <person name="Zhou H."/>
            <person name="Di Palma S."/>
            <person name="Preisinger C."/>
            <person name="Peng M."/>
            <person name="Polat A.N."/>
            <person name="Heck A.J."/>
            <person name="Mohammed S."/>
        </authorList>
    </citation>
    <scope>PHOSPHORYLATION [LARGE SCALE ANALYSIS] AT SER-163; SER-168; SER-187; THR-190 AND SER-432</scope>
    <scope>IDENTIFICATION BY MASS SPECTROMETRY [LARGE SCALE ANALYSIS]</scope>
    <source>
        <tissue>Cervix carcinoma</tissue>
        <tissue>Erythroleukemia</tissue>
    </source>
</reference>
<reference key="19">
    <citation type="journal article" date="2014" name="J. Proteomics">
        <title>An enzyme assisted RP-RPLC approach for in-depth analysis of human liver phosphoproteome.</title>
        <authorList>
            <person name="Bian Y."/>
            <person name="Song C."/>
            <person name="Cheng K."/>
            <person name="Dong M."/>
            <person name="Wang F."/>
            <person name="Huang J."/>
            <person name="Sun D."/>
            <person name="Wang L."/>
            <person name="Ye M."/>
            <person name="Zou H."/>
        </authorList>
    </citation>
    <scope>PHOSPHORYLATION [LARGE SCALE ANALYSIS] AT SER-110; SER-163; SER-187 AND THR-190</scope>
    <scope>IDENTIFICATION BY MASS SPECTROMETRY [LARGE SCALE ANALYSIS]</scope>
    <source>
        <tissue>Liver</tissue>
    </source>
</reference>
<proteinExistence type="evidence at protein level"/>
<keyword id="KW-0002">3D-structure</keyword>
<keyword id="KW-0010">Activator</keyword>
<keyword id="KW-0025">Alternative splicing</keyword>
<keyword id="KW-0238">DNA-binding</keyword>
<keyword id="KW-0539">Nucleus</keyword>
<keyword id="KW-0597">Phosphoprotein</keyword>
<keyword id="KW-1267">Proteomics identification</keyword>
<keyword id="KW-1185">Reference proteome</keyword>
<keyword id="KW-0804">Transcription</keyword>
<keyword id="KW-0805">Transcription regulation</keyword>
<gene>
    <name type="primary">ELF1</name>
</gene>
<accession>P32519</accession>
<accession>B4E2I5</accession>
<accession>E9PDQ9</accession>
<accession>Q8N6F6</accession>
<accession>Q9UDE1</accession>
<feature type="chain" id="PRO_0000204085" description="ETS-related transcription factor Elf-1">
    <location>
        <begin position="1"/>
        <end position="619"/>
    </location>
</feature>
<feature type="DNA-binding region" description="ETS" evidence="1">
    <location>
        <begin position="208"/>
        <end position="290"/>
    </location>
</feature>
<feature type="region of interest" description="Disordered" evidence="2">
    <location>
        <begin position="158"/>
        <end position="199"/>
    </location>
</feature>
<feature type="region of interest" description="Disordered" evidence="2">
    <location>
        <begin position="300"/>
        <end position="366"/>
    </location>
</feature>
<feature type="region of interest" description="Disordered" evidence="2">
    <location>
        <begin position="564"/>
        <end position="592"/>
    </location>
</feature>
<feature type="compositionally biased region" description="Basic residues" evidence="2">
    <location>
        <begin position="173"/>
        <end position="182"/>
    </location>
</feature>
<feature type="compositionally biased region" description="Low complexity" evidence="2">
    <location>
        <begin position="305"/>
        <end position="321"/>
    </location>
</feature>
<feature type="compositionally biased region" description="Polar residues" evidence="2">
    <location>
        <begin position="322"/>
        <end position="335"/>
    </location>
</feature>
<feature type="compositionally biased region" description="Basic and acidic residues" evidence="2">
    <location>
        <begin position="568"/>
        <end position="586"/>
    </location>
</feature>
<feature type="modified residue" description="Phosphoserine" evidence="14">
    <location>
        <position position="110"/>
    </location>
</feature>
<feature type="modified residue" description="Phosphoserine" evidence="12 13 14">
    <location>
        <position position="163"/>
    </location>
</feature>
<feature type="modified residue" description="Phosphoserine" evidence="12">
    <location>
        <position position="167"/>
    </location>
</feature>
<feature type="modified residue" description="Phosphoserine" evidence="11 13">
    <location>
        <position position="168"/>
    </location>
</feature>
<feature type="modified residue" description="Phosphoserine" evidence="13 14">
    <location>
        <position position="187"/>
    </location>
</feature>
<feature type="modified residue" description="Phosphothreonine" evidence="13 14">
    <location>
        <position position="190"/>
    </location>
</feature>
<feature type="modified residue" description="Phosphoserine" evidence="10 11 12 13">
    <location>
        <position position="432"/>
    </location>
</feature>
<feature type="splice variant" id="VSP_045682" description="In isoform 2." evidence="8">
    <location>
        <begin position="122"/>
        <end position="145"/>
    </location>
</feature>
<feature type="sequence variant" id="VAR_048942" description="In dbSNP:rs7799." evidence="4">
    <original>N</original>
    <variation>S</variation>
    <location>
        <position position="58"/>
    </location>
</feature>
<feature type="sequence variant" id="VAR_048943" description="In dbSNP:rs1056820." evidence="4">
    <original>T</original>
    <variation>S</variation>
    <location>
        <position position="343"/>
    </location>
</feature>
<feature type="sequence variant" id="VAR_048944" description="In dbSNP:rs7323148.">
    <original>T</original>
    <variation>I</variation>
    <location>
        <position position="403"/>
    </location>
</feature>
<sequence>MAAVVQQNDLVFEFASNVMEDERQLGDPAIFPAVIVEHVPGADILNSYAGLACVEEPNDMITESSLDVAEEEIIDDDDDDITLTVEASCHDGDETIETIEAAEALLNMDSPGPMLDEKRINNNIFSSPEDDMVVAPVTHVSVTLDGIPEVMETQQVQEKYADSPGASSPEQPKRKKGRKTKPPRPDSPATTPNISVKKKNKDGKGNTIYLWEFLLALLQDKATCPKYIKWTQREKGIFKLVDSKAVSRLWGKHKNKPDMNYETMGRALRYYYQRGILAKVEGQRLVYQFKEMPKDLIYINDEDPSSSIESSDPSLSSSATSNRNQTSRSRVSSSPGVKGGATTVLKPGNSKAAKPKDPVEVAQPSEVLRTVQPTQSPYPTQLFRTVHVVQPVQAVPEGEAARTSTMQDETLNSSVQSIRTIQAPTQVPVVVSPRNQQLHTVTLQTVPLTTVIASTDPSAGTGSQKFILQAIPSSQPMTVLKENVMLQSQKAGSPPSIVLGPAQVQQVLTSNVQTICNGTVSVASSPSFSATAPVVTFSPRSSQLVAHPPGTVITSVIKTQETKTLTQEVEKKESEDHLKENTEKTEQQPQPYVMVVSSSNGFTSQVAMKQNELLEPNSF</sequence>